<keyword id="KW-0488">Methylation</keyword>
<keyword id="KW-0687">Ribonucleoprotein</keyword>
<keyword id="KW-0689">Ribosomal protein</keyword>
<keyword id="KW-0694">RNA-binding</keyword>
<keyword id="KW-0699">rRNA-binding</keyword>
<sequence>MRSGVIAQKLGMTRVYNDAGEHVPVTVLRMENCHVVAQRTVEKNGYTAVQLGVGMAKVKNTSKAMRGHFAKAEVEPKAKLAEFRVSPDNLLEVGVEITAEHFVAGQKVDVTGTSIGKGFAGVMKRHNFGGHRASHGNSITHRSHGSTGQRQDPGKVFKGKKMAGHMGQTRVTTQNIEVVSTDSDRGLILVRGAVPGSKGAWILVRDAVKASLPENAPKPAGLRAGAKAEAAATEGGE</sequence>
<comment type="function">
    <text evidence="1">One of the primary rRNA binding proteins, it binds directly near the 3'-end of the 23S rRNA, where it nucleates assembly of the 50S subunit.</text>
</comment>
<comment type="subunit">
    <text evidence="1">Part of the 50S ribosomal subunit. Forms a cluster with proteins L14 and L19.</text>
</comment>
<comment type="PTM">
    <text evidence="1">Methylated by PrmB.</text>
</comment>
<comment type="similarity">
    <text evidence="1">Belongs to the universal ribosomal protein uL3 family.</text>
</comment>
<comment type="sequence caution" evidence="3">
    <conflict type="erroneous initiation">
        <sequence resource="EMBL-CDS" id="AAL51938"/>
    </conflict>
</comment>
<evidence type="ECO:0000255" key="1">
    <source>
        <dbReference type="HAMAP-Rule" id="MF_01325"/>
    </source>
</evidence>
<evidence type="ECO:0000256" key="2">
    <source>
        <dbReference type="SAM" id="MobiDB-lite"/>
    </source>
</evidence>
<evidence type="ECO:0000305" key="3"/>
<proteinExistence type="inferred from homology"/>
<feature type="chain" id="PRO_0000077075" description="Large ribosomal subunit protein uL3">
    <location>
        <begin position="1"/>
        <end position="237"/>
    </location>
</feature>
<feature type="region of interest" description="Disordered" evidence="2">
    <location>
        <begin position="133"/>
        <end position="155"/>
    </location>
</feature>
<feature type="region of interest" description="Disordered" evidence="2">
    <location>
        <begin position="213"/>
        <end position="237"/>
    </location>
</feature>
<feature type="compositionally biased region" description="Polar residues" evidence="2">
    <location>
        <begin position="135"/>
        <end position="150"/>
    </location>
</feature>
<feature type="compositionally biased region" description="Low complexity" evidence="2">
    <location>
        <begin position="220"/>
        <end position="237"/>
    </location>
</feature>
<feature type="modified residue" description="N5-methylglutamine" evidence="1">
    <location>
        <position position="151"/>
    </location>
</feature>
<dbReference type="EMBL" id="AE008917">
    <property type="protein sequence ID" value="AAL51938.1"/>
    <property type="status" value="ALT_INIT"/>
    <property type="molecule type" value="Genomic_DNA"/>
</dbReference>
<dbReference type="PIR" id="AG3346">
    <property type="entry name" value="AG3346"/>
</dbReference>
<dbReference type="RefSeq" id="WP_002964362.1">
    <property type="nucleotide sequence ID" value="NZ_GG703780.1"/>
</dbReference>
<dbReference type="SMR" id="Q8YHP0"/>
<dbReference type="GeneID" id="93016439"/>
<dbReference type="KEGG" id="bme:BMEI0757"/>
<dbReference type="KEGG" id="bmel:DK63_665"/>
<dbReference type="PATRIC" id="fig|224914.52.peg.696"/>
<dbReference type="eggNOG" id="COG0087">
    <property type="taxonomic scope" value="Bacteria"/>
</dbReference>
<dbReference type="Proteomes" id="UP000000419">
    <property type="component" value="Chromosome I"/>
</dbReference>
<dbReference type="GO" id="GO:0022625">
    <property type="term" value="C:cytosolic large ribosomal subunit"/>
    <property type="evidence" value="ECO:0007669"/>
    <property type="project" value="TreeGrafter"/>
</dbReference>
<dbReference type="GO" id="GO:0019843">
    <property type="term" value="F:rRNA binding"/>
    <property type="evidence" value="ECO:0007669"/>
    <property type="project" value="UniProtKB-UniRule"/>
</dbReference>
<dbReference type="GO" id="GO:0003735">
    <property type="term" value="F:structural constituent of ribosome"/>
    <property type="evidence" value="ECO:0007669"/>
    <property type="project" value="InterPro"/>
</dbReference>
<dbReference type="GO" id="GO:0006412">
    <property type="term" value="P:translation"/>
    <property type="evidence" value="ECO:0007669"/>
    <property type="project" value="UniProtKB-UniRule"/>
</dbReference>
<dbReference type="FunFam" id="2.40.30.10:FF:000004">
    <property type="entry name" value="50S ribosomal protein L3"/>
    <property type="match status" value="1"/>
</dbReference>
<dbReference type="FunFam" id="3.30.160.810:FF:000001">
    <property type="entry name" value="50S ribosomal protein L3"/>
    <property type="match status" value="1"/>
</dbReference>
<dbReference type="Gene3D" id="3.30.160.810">
    <property type="match status" value="1"/>
</dbReference>
<dbReference type="Gene3D" id="2.40.30.10">
    <property type="entry name" value="Translation factors"/>
    <property type="match status" value="1"/>
</dbReference>
<dbReference type="HAMAP" id="MF_01325_B">
    <property type="entry name" value="Ribosomal_uL3_B"/>
    <property type="match status" value="1"/>
</dbReference>
<dbReference type="InterPro" id="IPR000597">
    <property type="entry name" value="Ribosomal_uL3"/>
</dbReference>
<dbReference type="InterPro" id="IPR019927">
    <property type="entry name" value="Ribosomal_uL3_bac/org-type"/>
</dbReference>
<dbReference type="InterPro" id="IPR019926">
    <property type="entry name" value="Ribosomal_uL3_CS"/>
</dbReference>
<dbReference type="InterPro" id="IPR009000">
    <property type="entry name" value="Transl_B-barrel_sf"/>
</dbReference>
<dbReference type="NCBIfam" id="TIGR03625">
    <property type="entry name" value="L3_bact"/>
    <property type="match status" value="1"/>
</dbReference>
<dbReference type="PANTHER" id="PTHR11229">
    <property type="entry name" value="50S RIBOSOMAL PROTEIN L3"/>
    <property type="match status" value="1"/>
</dbReference>
<dbReference type="PANTHER" id="PTHR11229:SF16">
    <property type="entry name" value="LARGE RIBOSOMAL SUBUNIT PROTEIN UL3C"/>
    <property type="match status" value="1"/>
</dbReference>
<dbReference type="Pfam" id="PF00297">
    <property type="entry name" value="Ribosomal_L3"/>
    <property type="match status" value="1"/>
</dbReference>
<dbReference type="SUPFAM" id="SSF50447">
    <property type="entry name" value="Translation proteins"/>
    <property type="match status" value="1"/>
</dbReference>
<dbReference type="PROSITE" id="PS00474">
    <property type="entry name" value="RIBOSOMAL_L3"/>
    <property type="match status" value="1"/>
</dbReference>
<accession>Q8YHP0</accession>
<name>RL3_BRUME</name>
<reference key="1">
    <citation type="journal article" date="2002" name="Proc. Natl. Acad. Sci. U.S.A.">
        <title>The genome sequence of the facultative intracellular pathogen Brucella melitensis.</title>
        <authorList>
            <person name="DelVecchio V.G."/>
            <person name="Kapatral V."/>
            <person name="Redkar R.J."/>
            <person name="Patra G."/>
            <person name="Mujer C."/>
            <person name="Los T."/>
            <person name="Ivanova N."/>
            <person name="Anderson I."/>
            <person name="Bhattacharyya A."/>
            <person name="Lykidis A."/>
            <person name="Reznik G."/>
            <person name="Jablonski L."/>
            <person name="Larsen N."/>
            <person name="D'Souza M."/>
            <person name="Bernal A."/>
            <person name="Mazur M."/>
            <person name="Goltsman E."/>
            <person name="Selkov E."/>
            <person name="Elzer P.H."/>
            <person name="Hagius S."/>
            <person name="O'Callaghan D."/>
            <person name="Letesson J.-J."/>
            <person name="Haselkorn R."/>
            <person name="Kyrpides N.C."/>
            <person name="Overbeek R."/>
        </authorList>
    </citation>
    <scope>NUCLEOTIDE SEQUENCE [LARGE SCALE GENOMIC DNA]</scope>
    <source>
        <strain>ATCC 23456 / CCUG 17765 / NCTC 10094 / 16M</strain>
    </source>
</reference>
<gene>
    <name evidence="1" type="primary">rplC</name>
    <name type="ordered locus">BMEI0757</name>
</gene>
<protein>
    <recommendedName>
        <fullName evidence="1">Large ribosomal subunit protein uL3</fullName>
    </recommendedName>
    <alternativeName>
        <fullName evidence="3">50S ribosomal protein L3</fullName>
    </alternativeName>
</protein>
<organism>
    <name type="scientific">Brucella melitensis biotype 1 (strain ATCC 23456 / CCUG 17765 / NCTC 10094 / 16M)</name>
    <dbReference type="NCBI Taxonomy" id="224914"/>
    <lineage>
        <taxon>Bacteria</taxon>
        <taxon>Pseudomonadati</taxon>
        <taxon>Pseudomonadota</taxon>
        <taxon>Alphaproteobacteria</taxon>
        <taxon>Hyphomicrobiales</taxon>
        <taxon>Brucellaceae</taxon>
        <taxon>Brucella/Ochrobactrum group</taxon>
        <taxon>Brucella</taxon>
    </lineage>
</organism>